<name>STHA_PECCC</name>
<organism>
    <name type="scientific">Pectobacterium carotovorum subsp. carotovorum</name>
    <name type="common">Erwinia carotovora subsp. carotovora</name>
    <dbReference type="NCBI Taxonomy" id="555"/>
    <lineage>
        <taxon>Bacteria</taxon>
        <taxon>Pseudomonadati</taxon>
        <taxon>Pseudomonadota</taxon>
        <taxon>Gammaproteobacteria</taxon>
        <taxon>Enterobacterales</taxon>
        <taxon>Pectobacteriaceae</taxon>
        <taxon>Pectobacterium</taxon>
    </lineage>
</organism>
<reference key="1">
    <citation type="journal article" date="1998" name="FEMS Microbiol. Lett.">
        <title>The oxyR gene from Erwinia carotovora: cloning, sequence analysis and expression in Escherichia coli.</title>
        <authorList>
            <person name="Calcutt M.J."/>
            <person name="Lewis M.S."/>
            <person name="Eisenstark A."/>
        </authorList>
    </citation>
    <scope>NUCLEOTIDE SEQUENCE [GENOMIC DNA]</scope>
    <source>
        <strain>71</strain>
    </source>
</reference>
<keyword id="KW-0963">Cytoplasm</keyword>
<keyword id="KW-0274">FAD</keyword>
<keyword id="KW-0285">Flavoprotein</keyword>
<keyword id="KW-0520">NAD</keyword>
<keyword id="KW-0521">NADP</keyword>
<keyword id="KW-0560">Oxidoreductase</keyword>
<sequence length="150" mass="16451">SLASAAYDQGRLAAQAIIKGDASAHLIEDIPTGIYTIPEISSVGKTEQELTAMKVPYEVGRAQFKHLARAQIVGMNVGSLKILFHRETKQILGIHCFGERAAEIIHIGQAIMEQKGEGNTIEYFVNTTFNYPTMAEAYRVAALNGLNRLF</sequence>
<feature type="chain" id="PRO_0000068064" description="Soluble pyridine nucleotide transhydrogenase">
    <location>
        <begin position="1" status="less than"/>
        <end position="150"/>
    </location>
</feature>
<feature type="non-terminal residue">
    <location>
        <position position="1"/>
    </location>
</feature>
<gene>
    <name type="primary">sthA</name>
    <name type="synonym">udhA</name>
</gene>
<dbReference type="EC" id="1.6.1.1"/>
<dbReference type="EMBL" id="U74302">
    <property type="protein sequence ID" value="AAC72240.1"/>
    <property type="molecule type" value="Genomic_DNA"/>
</dbReference>
<dbReference type="SMR" id="P71317"/>
<dbReference type="GO" id="GO:0005829">
    <property type="term" value="C:cytosol"/>
    <property type="evidence" value="ECO:0007669"/>
    <property type="project" value="TreeGrafter"/>
</dbReference>
<dbReference type="GO" id="GO:0004148">
    <property type="term" value="F:dihydrolipoyl dehydrogenase (NADH) activity"/>
    <property type="evidence" value="ECO:0007669"/>
    <property type="project" value="TreeGrafter"/>
</dbReference>
<dbReference type="GO" id="GO:0050660">
    <property type="term" value="F:flavin adenine dinucleotide binding"/>
    <property type="evidence" value="ECO:0007669"/>
    <property type="project" value="TreeGrafter"/>
</dbReference>
<dbReference type="GO" id="GO:0003957">
    <property type="term" value="F:NAD(P)+ transhydrogenase (Si-specific) activity"/>
    <property type="evidence" value="ECO:0007669"/>
    <property type="project" value="UniProtKB-EC"/>
</dbReference>
<dbReference type="GO" id="GO:0006103">
    <property type="term" value="P:2-oxoglutarate metabolic process"/>
    <property type="evidence" value="ECO:0007669"/>
    <property type="project" value="TreeGrafter"/>
</dbReference>
<dbReference type="FunFam" id="3.30.390.30:FF:000002">
    <property type="entry name" value="Soluble pyridine nucleotide transhydrogenase"/>
    <property type="match status" value="1"/>
</dbReference>
<dbReference type="Gene3D" id="3.30.390.30">
    <property type="match status" value="1"/>
</dbReference>
<dbReference type="InterPro" id="IPR050151">
    <property type="entry name" value="Class-I_Pyr_Nuc-Dis_Oxidored"/>
</dbReference>
<dbReference type="InterPro" id="IPR016156">
    <property type="entry name" value="FAD/NAD-linked_Rdtase_dimer_sf"/>
</dbReference>
<dbReference type="InterPro" id="IPR004099">
    <property type="entry name" value="Pyr_nucl-diS_OxRdtase_dimer"/>
</dbReference>
<dbReference type="PANTHER" id="PTHR22912">
    <property type="entry name" value="DISULFIDE OXIDOREDUCTASE"/>
    <property type="match status" value="1"/>
</dbReference>
<dbReference type="PANTHER" id="PTHR22912:SF93">
    <property type="entry name" value="SOLUBLE PYRIDINE NUCLEOTIDE TRANSHYDROGENASE"/>
    <property type="match status" value="1"/>
</dbReference>
<dbReference type="Pfam" id="PF02852">
    <property type="entry name" value="Pyr_redox_dim"/>
    <property type="match status" value="1"/>
</dbReference>
<dbReference type="PRINTS" id="PR00411">
    <property type="entry name" value="PNDRDTASEI"/>
</dbReference>
<dbReference type="SUPFAM" id="SSF55424">
    <property type="entry name" value="FAD/NAD-linked reductases, dimerisation (C-terminal) domain"/>
    <property type="match status" value="1"/>
</dbReference>
<accession>P71317</accession>
<comment type="function">
    <text evidence="1">Conversion of NADPH, generated by peripheral catabolic pathways, to NADH, which can enter the respiratory chain for energy generation.</text>
</comment>
<comment type="catalytic activity">
    <reaction>
        <text>NAD(+) + NADPH = NADH + NADP(+)</text>
        <dbReference type="Rhea" id="RHEA:11692"/>
        <dbReference type="ChEBI" id="CHEBI:57540"/>
        <dbReference type="ChEBI" id="CHEBI:57783"/>
        <dbReference type="ChEBI" id="CHEBI:57945"/>
        <dbReference type="ChEBI" id="CHEBI:58349"/>
        <dbReference type="EC" id="1.6.1.1"/>
    </reaction>
</comment>
<comment type="cofactor">
    <cofactor evidence="1">
        <name>FAD</name>
        <dbReference type="ChEBI" id="CHEBI:57692"/>
    </cofactor>
    <text evidence="1">Binds 1 FAD per subunit.</text>
</comment>
<comment type="subcellular location">
    <subcellularLocation>
        <location evidence="1">Cytoplasm</location>
    </subcellularLocation>
</comment>
<comment type="similarity">
    <text evidence="2">Belongs to the class-I pyridine nucleotide-disulfide oxidoreductase family.</text>
</comment>
<proteinExistence type="inferred from homology"/>
<protein>
    <recommendedName>
        <fullName>Soluble pyridine nucleotide transhydrogenase</fullName>
        <shortName>STH</shortName>
        <ecNumber>1.6.1.1</ecNumber>
    </recommendedName>
    <alternativeName>
        <fullName>NAD(P)(+) transhydrogenase [B-specific]</fullName>
    </alternativeName>
</protein>
<evidence type="ECO:0000250" key="1"/>
<evidence type="ECO:0000305" key="2"/>